<keyword id="KW-0963">Cytoplasm</keyword>
<keyword id="KW-0671">Queuosine biosynthesis</keyword>
<keyword id="KW-0949">S-adenosyl-L-methionine</keyword>
<keyword id="KW-0808">Transferase</keyword>
<comment type="function">
    <text evidence="1">Transfers and isomerizes the ribose moiety from AdoMet to the 7-aminomethyl group of 7-deazaguanine (preQ1-tRNA) to give epoxyqueuosine (oQ-tRNA).</text>
</comment>
<comment type="catalytic activity">
    <reaction evidence="1">
        <text>7-aminomethyl-7-carbaguanosine(34) in tRNA + S-adenosyl-L-methionine = epoxyqueuosine(34) in tRNA + adenine + L-methionine + 2 H(+)</text>
        <dbReference type="Rhea" id="RHEA:32155"/>
        <dbReference type="Rhea" id="RHEA-COMP:10342"/>
        <dbReference type="Rhea" id="RHEA-COMP:18582"/>
        <dbReference type="ChEBI" id="CHEBI:15378"/>
        <dbReference type="ChEBI" id="CHEBI:16708"/>
        <dbReference type="ChEBI" id="CHEBI:57844"/>
        <dbReference type="ChEBI" id="CHEBI:59789"/>
        <dbReference type="ChEBI" id="CHEBI:82833"/>
        <dbReference type="ChEBI" id="CHEBI:194443"/>
        <dbReference type="EC" id="2.4.99.17"/>
    </reaction>
</comment>
<comment type="pathway">
    <text evidence="1">tRNA modification; tRNA-queuosine biosynthesis.</text>
</comment>
<comment type="subunit">
    <text evidence="1">Monomer.</text>
</comment>
<comment type="subcellular location">
    <subcellularLocation>
        <location evidence="1">Cytoplasm</location>
    </subcellularLocation>
</comment>
<comment type="similarity">
    <text evidence="1">Belongs to the QueA family.</text>
</comment>
<name>QUEA_SALDC</name>
<organism>
    <name type="scientific">Salmonella dublin (strain CT_02021853)</name>
    <dbReference type="NCBI Taxonomy" id="439851"/>
    <lineage>
        <taxon>Bacteria</taxon>
        <taxon>Pseudomonadati</taxon>
        <taxon>Pseudomonadota</taxon>
        <taxon>Gammaproteobacteria</taxon>
        <taxon>Enterobacterales</taxon>
        <taxon>Enterobacteriaceae</taxon>
        <taxon>Salmonella</taxon>
    </lineage>
</organism>
<gene>
    <name evidence="1" type="primary">queA</name>
    <name type="ordered locus">SeD_A0444</name>
</gene>
<feature type="chain" id="PRO_1000094810" description="S-adenosylmethionine:tRNA ribosyltransferase-isomerase">
    <location>
        <begin position="1"/>
        <end position="354"/>
    </location>
</feature>
<evidence type="ECO:0000255" key="1">
    <source>
        <dbReference type="HAMAP-Rule" id="MF_00113"/>
    </source>
</evidence>
<reference key="1">
    <citation type="journal article" date="2011" name="J. Bacteriol.">
        <title>Comparative genomics of 28 Salmonella enterica isolates: evidence for CRISPR-mediated adaptive sublineage evolution.</title>
        <authorList>
            <person name="Fricke W.F."/>
            <person name="Mammel M.K."/>
            <person name="McDermott P.F."/>
            <person name="Tartera C."/>
            <person name="White D.G."/>
            <person name="Leclerc J.E."/>
            <person name="Ravel J."/>
            <person name="Cebula T.A."/>
        </authorList>
    </citation>
    <scope>NUCLEOTIDE SEQUENCE [LARGE SCALE GENOMIC DNA]</scope>
    <source>
        <strain>CT_02021853</strain>
    </source>
</reference>
<accession>B5FKQ9</accession>
<proteinExistence type="inferred from homology"/>
<sequence>MRVTDFSFELPESLIAHYPQPERSRCRLLSLEGPTGALTHGTFTDLLDKLNPGDLLVFNNTRVIPARLFGRKASGGKIEVLVERMLDDKRILAHIRASKAPKPGTELLLGDDESIHATMTARHGALFEVEFNDPRPVLDILNAIGHMPLPPYIDRPDEDADRELYQTVYSEKPGAVAAPTAGLHFDEPLLAALREKGIEMAFVTLHVGAGTFQPVRVDTIEDHIMHSEYAEVPQEVVDAVLAAKARGNRVIAVGTTSVRSLESAAQAAKNDLIEPFFGDTQIFIYPGYQYKVIDALITNFHLPESTLIMLVSAFAGYQHTMNAYKTAVEQKYRFFSYGDAMFITYNPQAISERP</sequence>
<protein>
    <recommendedName>
        <fullName evidence="1">S-adenosylmethionine:tRNA ribosyltransferase-isomerase</fullName>
        <ecNumber evidence="1">2.4.99.17</ecNumber>
    </recommendedName>
    <alternativeName>
        <fullName evidence="1">Queuosine biosynthesis protein QueA</fullName>
    </alternativeName>
</protein>
<dbReference type="EC" id="2.4.99.17" evidence="1"/>
<dbReference type="EMBL" id="CP001144">
    <property type="protein sequence ID" value="ACH77259.1"/>
    <property type="molecule type" value="Genomic_DNA"/>
</dbReference>
<dbReference type="RefSeq" id="WP_001266522.1">
    <property type="nucleotide sequence ID" value="NC_011205.1"/>
</dbReference>
<dbReference type="SMR" id="B5FKQ9"/>
<dbReference type="KEGG" id="sed:SeD_A0444"/>
<dbReference type="HOGENOM" id="CLU_039110_1_0_6"/>
<dbReference type="UniPathway" id="UPA00392"/>
<dbReference type="Proteomes" id="UP000008322">
    <property type="component" value="Chromosome"/>
</dbReference>
<dbReference type="GO" id="GO:0005737">
    <property type="term" value="C:cytoplasm"/>
    <property type="evidence" value="ECO:0007669"/>
    <property type="project" value="UniProtKB-SubCell"/>
</dbReference>
<dbReference type="GO" id="GO:0051075">
    <property type="term" value="F:S-adenosylmethionine:tRNA ribosyltransferase-isomerase activity"/>
    <property type="evidence" value="ECO:0007669"/>
    <property type="project" value="UniProtKB-EC"/>
</dbReference>
<dbReference type="GO" id="GO:0008616">
    <property type="term" value="P:queuosine biosynthetic process"/>
    <property type="evidence" value="ECO:0007669"/>
    <property type="project" value="UniProtKB-UniRule"/>
</dbReference>
<dbReference type="GO" id="GO:0002099">
    <property type="term" value="P:tRNA wobble guanine modification"/>
    <property type="evidence" value="ECO:0007669"/>
    <property type="project" value="TreeGrafter"/>
</dbReference>
<dbReference type="FunFam" id="2.40.10.240:FF:000001">
    <property type="entry name" value="S-adenosylmethionine:tRNA ribosyltransferase-isomerase"/>
    <property type="match status" value="1"/>
</dbReference>
<dbReference type="FunFam" id="3.40.1780.10:FF:000001">
    <property type="entry name" value="S-adenosylmethionine:tRNA ribosyltransferase-isomerase"/>
    <property type="match status" value="1"/>
</dbReference>
<dbReference type="Gene3D" id="2.40.10.240">
    <property type="entry name" value="QueA-like"/>
    <property type="match status" value="1"/>
</dbReference>
<dbReference type="Gene3D" id="3.40.1780.10">
    <property type="entry name" value="QueA-like"/>
    <property type="match status" value="1"/>
</dbReference>
<dbReference type="HAMAP" id="MF_00113">
    <property type="entry name" value="QueA"/>
    <property type="match status" value="1"/>
</dbReference>
<dbReference type="InterPro" id="IPR003699">
    <property type="entry name" value="QueA"/>
</dbReference>
<dbReference type="InterPro" id="IPR042118">
    <property type="entry name" value="QueA_dom1"/>
</dbReference>
<dbReference type="InterPro" id="IPR042119">
    <property type="entry name" value="QueA_dom2"/>
</dbReference>
<dbReference type="InterPro" id="IPR036100">
    <property type="entry name" value="QueA_sf"/>
</dbReference>
<dbReference type="NCBIfam" id="NF001140">
    <property type="entry name" value="PRK00147.1"/>
    <property type="match status" value="1"/>
</dbReference>
<dbReference type="NCBIfam" id="TIGR00113">
    <property type="entry name" value="queA"/>
    <property type="match status" value="1"/>
</dbReference>
<dbReference type="PANTHER" id="PTHR30307">
    <property type="entry name" value="S-ADENOSYLMETHIONINE:TRNA RIBOSYLTRANSFERASE-ISOMERASE"/>
    <property type="match status" value="1"/>
</dbReference>
<dbReference type="PANTHER" id="PTHR30307:SF0">
    <property type="entry name" value="S-ADENOSYLMETHIONINE:TRNA RIBOSYLTRANSFERASE-ISOMERASE"/>
    <property type="match status" value="1"/>
</dbReference>
<dbReference type="Pfam" id="PF02547">
    <property type="entry name" value="Queuosine_synth"/>
    <property type="match status" value="1"/>
</dbReference>
<dbReference type="SUPFAM" id="SSF111337">
    <property type="entry name" value="QueA-like"/>
    <property type="match status" value="1"/>
</dbReference>